<keyword id="KW-0963">Cytoplasm</keyword>
<keyword id="KW-0227">DNA damage</keyword>
<keyword id="KW-0479">Metal-binding</keyword>
<keyword id="KW-0539">Nucleus</keyword>
<keyword id="KW-0597">Phosphoprotein</keyword>
<keyword id="KW-1185">Reference proteome</keyword>
<keyword id="KW-0677">Repeat</keyword>
<keyword id="KW-0832">Ubl conjugation</keyword>
<keyword id="KW-0862">Zinc</keyword>
<sequence>MDPECSQLLPALCAVLADPRQPMADDTCLEKLLDWFKTITEAGSSLLLLQENPCLVELLCHMLKPQDLSSRVLSFSLRLTGVFAAQEDCFQYLQQGELLPRLFGEAGPLGGAAWTAPTVRSGWIQGLRSLARHPSALHFLADCGAVDTIFSLQGDSSLFVASAAGQLLVHILGLSMQGPADGPPSLQAGDWPACAQKIVDHIEESLRSAATPQITQALNVLTTTFGHCHDPWTRVLWVRLSPLVAGLLEKDPVPAAHSLVDLLLSVARSPGLSSSSCGLWETLAQTLSRLSPTQAGPLALGILKLQDCPQALRAQAFAVLLQPLACVLKATTQAPGASGMVDGTAGDSVTVDTLLPSKAACVGLLCRTLAHLELLLPLPQRPCPWPQASLLGAAVTLLQLCQGSASPTSDAGRHLCALLLGCVRVQRAALDFLGTLSQGTGPPELVTEVFAVLLEYLRSPDSSPTVLKKAFQATFRWLLSSPKTPGCWDLDPQALLFLRELLPVLQKRLCSPCWEVRDSGLEFLTQMTGRWGGQASFRHALLASEVPKLTEQLLRDPESYVRASAVAATGQLSSQGLCVSPASPEHLGGQQKSPLSELLHILSTDSEGFPRRAAMHVFTQWLRDSHADVVGDTEEFVAGVLQVASQDLDWEVRAQGLELALVFLEQTLGQPGSPCPYAVTPPVVAPARPLAQALQPLCRVRLFEFAFRALFDCDRPVAQKSCDLLLFLRAKTASSSSPQEARISPDVASVEAALQRWQAGDQAQPLGDLEPEVVLAVLRSMDLEGLRGALAESSDHVEKSPQSLLQDMLATVGILGENEADCY</sequence>
<protein>
    <recommendedName>
        <fullName evidence="2">Integrator complex assembly factor BRAT1</fullName>
    </recommendedName>
    <alternativeName>
        <fullName>BRCA1-associated ATM activator 1</fullName>
    </alternativeName>
    <alternativeName>
        <fullName>BRCA1-associated protein required for ATM activation protein 1</fullName>
    </alternativeName>
</protein>
<name>BRAT1_AILME</name>
<comment type="function">
    <text evidence="1">Component of a multiprotein complex required for the assembly of the RNA endonuclease module of the integrator complex. Associates with INTS9 and INTS11 in the cytoplasm and blocks the active site of INTS11 to inhibit the endonuclease activity of INTS11 before formation of the full integrator complex. Following dissociation of WDR73 of the complex, BRAT1 facilitates the nuclear import of the INTS9-INTS11 heterodimer. In the nucleus, INTS4 is integrated to the INTS9-INTS11 heterodimer and BRAT1 is released from the mature RNA endonuclease module by inositol hexakisphosphate (InsP6). BRAT1 is also involved in DNA damage response; activates kinases ATM, SMC1A and PRKDC by modulating their phosphorylation status following ionizing radiation (IR) stress. Plays a role in regulating mitochondrial function and cell proliferation. Required for protein stability of MTOR and MTOR-related proteins, and cell cycle progress by growth factors.</text>
</comment>
<comment type="subunit">
    <text evidence="1">Part of the multiprotein complex composed of BRAT1, WDR73, as well as integrator complex subunits INTS9 and INTS11. Interacts with BRCA1 and ATM. Interacts with MTOR and RPTOR. Interacts with NDFIP1. Interacts with SMC1A and PRKDC.</text>
</comment>
<comment type="subcellular location">
    <subcellularLocation>
        <location evidence="1">Nucleus</location>
    </subcellularLocation>
    <subcellularLocation>
        <location evidence="1">Cytoplasm</location>
    </subcellularLocation>
    <text evidence="1">Present at double strand breaks (DSBs)following ionizing radiation treatment. The ubiquitinated form localizes in the nucleus in a NDFIP1-dependent manner.</text>
</comment>
<comment type="domain">
    <text evidence="1">The BRAT1-like motif mediates inhibition of the endonuclease activity of INTS11 by forming hyrogen bond and hydrophobic interactions with the active site of INTS11: Cys-822 coordinates one of the two active site zinc ions of INTS11.</text>
</comment>
<comment type="PTM">
    <text evidence="1">Ubiquitinated by NEDD4, NEDD4L and ITCH; mono- and polyubiquitinated forms are detected.</text>
</comment>
<comment type="similarity">
    <text evidence="2">Belongs to the BRAT1 family.</text>
</comment>
<evidence type="ECO:0000250" key="1">
    <source>
        <dbReference type="UniProtKB" id="Q6PJG6"/>
    </source>
</evidence>
<evidence type="ECO:0000305" key="2"/>
<proteinExistence type="inferred from homology"/>
<gene>
    <name type="primary">BRAT1</name>
    <name type="synonym">BAAT1</name>
    <name type="ORF">PANDA_020555</name>
</gene>
<accession>D2I4M3</accession>
<reference key="1">
    <citation type="journal article" date="2010" name="Nature">
        <title>The sequence and de novo assembly of the giant panda genome.</title>
        <authorList>
            <person name="Li R."/>
            <person name="Fan W."/>
            <person name="Tian G."/>
            <person name="Zhu H."/>
            <person name="He L."/>
            <person name="Cai J."/>
            <person name="Huang Q."/>
            <person name="Cai Q."/>
            <person name="Li B."/>
            <person name="Bai Y."/>
            <person name="Zhang Z."/>
            <person name="Zhang Y."/>
            <person name="Wang W."/>
            <person name="Li J."/>
            <person name="Wei F."/>
            <person name="Li H."/>
            <person name="Jian M."/>
            <person name="Li J."/>
            <person name="Zhang Z."/>
            <person name="Nielsen R."/>
            <person name="Li D."/>
            <person name="Gu W."/>
            <person name="Yang Z."/>
            <person name="Xuan Z."/>
            <person name="Ryder O.A."/>
            <person name="Leung F.C."/>
            <person name="Zhou Y."/>
            <person name="Cao J."/>
            <person name="Sun X."/>
            <person name="Fu Y."/>
            <person name="Fang X."/>
            <person name="Guo X."/>
            <person name="Wang B."/>
            <person name="Hou R."/>
            <person name="Shen F."/>
            <person name="Mu B."/>
            <person name="Ni P."/>
            <person name="Lin R."/>
            <person name="Qian W."/>
            <person name="Wang G."/>
            <person name="Yu C."/>
            <person name="Nie W."/>
            <person name="Wang J."/>
            <person name="Wu Z."/>
            <person name="Liang H."/>
            <person name="Min J."/>
            <person name="Wu Q."/>
            <person name="Cheng S."/>
            <person name="Ruan J."/>
            <person name="Wang M."/>
            <person name="Shi Z."/>
            <person name="Wen M."/>
            <person name="Liu B."/>
            <person name="Ren X."/>
            <person name="Zheng H."/>
            <person name="Dong D."/>
            <person name="Cook K."/>
            <person name="Shan G."/>
            <person name="Zhang H."/>
            <person name="Kosiol C."/>
            <person name="Xie X."/>
            <person name="Lu Z."/>
            <person name="Zheng H."/>
            <person name="Li Y."/>
            <person name="Steiner C.C."/>
            <person name="Lam T.T."/>
            <person name="Lin S."/>
            <person name="Zhang Q."/>
            <person name="Li G."/>
            <person name="Tian J."/>
            <person name="Gong T."/>
            <person name="Liu H."/>
            <person name="Zhang D."/>
            <person name="Fang L."/>
            <person name="Ye C."/>
            <person name="Zhang J."/>
            <person name="Hu W."/>
            <person name="Xu A."/>
            <person name="Ren Y."/>
            <person name="Zhang G."/>
            <person name="Bruford M.W."/>
            <person name="Li Q."/>
            <person name="Ma L."/>
            <person name="Guo Y."/>
            <person name="An N."/>
            <person name="Hu Y."/>
            <person name="Zheng Y."/>
            <person name="Shi Y."/>
            <person name="Li Z."/>
            <person name="Liu Q."/>
            <person name="Chen Y."/>
            <person name="Zhao J."/>
            <person name="Qu N."/>
            <person name="Zhao S."/>
            <person name="Tian F."/>
            <person name="Wang X."/>
            <person name="Wang H."/>
            <person name="Xu L."/>
            <person name="Liu X."/>
            <person name="Vinar T."/>
            <person name="Wang Y."/>
            <person name="Lam T.W."/>
            <person name="Yiu S.M."/>
            <person name="Liu S."/>
            <person name="Zhang H."/>
            <person name="Li D."/>
            <person name="Huang Y."/>
            <person name="Wang X."/>
            <person name="Yang G."/>
            <person name="Jiang Z."/>
            <person name="Wang J."/>
            <person name="Qin N."/>
            <person name="Li L."/>
            <person name="Li J."/>
            <person name="Bolund L."/>
            <person name="Kristiansen K."/>
            <person name="Wong G.K."/>
            <person name="Olson M."/>
            <person name="Zhang X."/>
            <person name="Li S."/>
            <person name="Yang H."/>
            <person name="Wang J."/>
            <person name="Wang J."/>
        </authorList>
    </citation>
    <scope>NUCLEOTIDE SEQUENCE [LARGE SCALE GENOMIC DNA]</scope>
</reference>
<feature type="chain" id="PRO_0000395836" description="Integrator complex assembly factor BRAT1">
    <location>
        <begin position="1"/>
        <end position="823"/>
    </location>
</feature>
<feature type="repeat" description="HEAT 1">
    <location>
        <begin position="495"/>
        <end position="531"/>
    </location>
</feature>
<feature type="repeat" description="HEAT 2">
    <location>
        <begin position="544"/>
        <end position="576"/>
    </location>
</feature>
<feature type="region of interest" description="Required for interaction with NDFIP1" evidence="1">
    <location>
        <begin position="100"/>
        <end position="200"/>
    </location>
</feature>
<feature type="short sequence motif" description="BRAT1-like motif" evidence="1">
    <location>
        <begin position="821"/>
        <end position="823"/>
    </location>
</feature>
<feature type="binding site" evidence="1">
    <location>
        <position position="822"/>
    </location>
    <ligand>
        <name>Zn(2+)</name>
        <dbReference type="ChEBI" id="CHEBI:29105"/>
    </ligand>
</feature>
<feature type="modified residue" description="Phosphoserine" evidence="1">
    <location>
        <position position="744"/>
    </location>
</feature>
<dbReference type="EMBL" id="GL194507">
    <property type="protein sequence ID" value="EFB25217.1"/>
    <property type="molecule type" value="Genomic_DNA"/>
</dbReference>
<dbReference type="RefSeq" id="XP_011215184.1">
    <property type="nucleotide sequence ID" value="XM_011216882.3"/>
</dbReference>
<dbReference type="SMR" id="D2I4M3"/>
<dbReference type="STRING" id="9646.ENSAMEP00000003393"/>
<dbReference type="Ensembl" id="ENSAMET00000003528.2">
    <property type="protein sequence ID" value="ENSAMEP00000003393.1"/>
    <property type="gene ID" value="ENSAMEG00000003206.2"/>
</dbReference>
<dbReference type="GeneID" id="100464618"/>
<dbReference type="KEGG" id="aml:100464618"/>
<dbReference type="CTD" id="221927"/>
<dbReference type="eggNOG" id="ENOG502QRW9">
    <property type="taxonomic scope" value="Eukaryota"/>
</dbReference>
<dbReference type="GeneTree" id="ENSGT00390000017551"/>
<dbReference type="HOGENOM" id="CLU_018926_1_0_1"/>
<dbReference type="InParanoid" id="D2I4M3"/>
<dbReference type="OMA" id="IQVFTEW"/>
<dbReference type="OrthoDB" id="10057956at2759"/>
<dbReference type="TreeFam" id="TF324349"/>
<dbReference type="Proteomes" id="UP000008912">
    <property type="component" value="Unassembled WGS sequence"/>
</dbReference>
<dbReference type="GO" id="GO:0005737">
    <property type="term" value="C:cytoplasm"/>
    <property type="evidence" value="ECO:0000250"/>
    <property type="project" value="UniProtKB"/>
</dbReference>
<dbReference type="GO" id="GO:0005634">
    <property type="term" value="C:nucleus"/>
    <property type="evidence" value="ECO:0000250"/>
    <property type="project" value="UniProtKB"/>
</dbReference>
<dbReference type="GO" id="GO:0008428">
    <property type="term" value="F:ribonuclease inhibitor activity"/>
    <property type="evidence" value="ECO:0000250"/>
    <property type="project" value="UniProtKB"/>
</dbReference>
<dbReference type="GO" id="GO:0006915">
    <property type="term" value="P:apoptotic process"/>
    <property type="evidence" value="ECO:0000250"/>
    <property type="project" value="UniProtKB"/>
</dbReference>
<dbReference type="GO" id="GO:0016477">
    <property type="term" value="P:cell migration"/>
    <property type="evidence" value="ECO:0000250"/>
    <property type="project" value="UniProtKB"/>
</dbReference>
<dbReference type="GO" id="GO:0008283">
    <property type="term" value="P:cell population proliferation"/>
    <property type="evidence" value="ECO:0000250"/>
    <property type="project" value="UniProtKB"/>
</dbReference>
<dbReference type="GO" id="GO:0006974">
    <property type="term" value="P:DNA damage response"/>
    <property type="evidence" value="ECO:0000250"/>
    <property type="project" value="UniProtKB"/>
</dbReference>
<dbReference type="GO" id="GO:0006006">
    <property type="term" value="P:glucose metabolic process"/>
    <property type="evidence" value="ECO:0000250"/>
    <property type="project" value="UniProtKB"/>
</dbReference>
<dbReference type="GO" id="GO:0160234">
    <property type="term" value="P:integrator complex assembly"/>
    <property type="evidence" value="ECO:0000250"/>
    <property type="project" value="UniProtKB"/>
</dbReference>
<dbReference type="GO" id="GO:0051646">
    <property type="term" value="P:mitochondrion localization"/>
    <property type="evidence" value="ECO:0000250"/>
    <property type="project" value="UniProtKB"/>
</dbReference>
<dbReference type="GO" id="GO:0030307">
    <property type="term" value="P:positive regulation of cell growth"/>
    <property type="evidence" value="ECO:0000250"/>
    <property type="project" value="UniProtKB"/>
</dbReference>
<dbReference type="GO" id="GO:0001934">
    <property type="term" value="P:positive regulation of protein phosphorylation"/>
    <property type="evidence" value="ECO:0000250"/>
    <property type="project" value="UniProtKB"/>
</dbReference>
<dbReference type="GO" id="GO:0034504">
    <property type="term" value="P:protein localization to nucleus"/>
    <property type="evidence" value="ECO:0000250"/>
    <property type="project" value="UniProtKB"/>
</dbReference>
<dbReference type="GO" id="GO:0010212">
    <property type="term" value="P:response to ionizing radiation"/>
    <property type="evidence" value="ECO:0000250"/>
    <property type="project" value="UniProtKB"/>
</dbReference>
<dbReference type="FunFam" id="1.25.10.10:FF:001003">
    <property type="entry name" value="BRCA1-associated ATM activator 1"/>
    <property type="match status" value="1"/>
</dbReference>
<dbReference type="Gene3D" id="1.25.10.10">
    <property type="entry name" value="Leucine-rich Repeat Variant"/>
    <property type="match status" value="1"/>
</dbReference>
<dbReference type="InterPro" id="IPR011989">
    <property type="entry name" value="ARM-like"/>
</dbReference>
<dbReference type="InterPro" id="IPR016024">
    <property type="entry name" value="ARM-type_fold"/>
</dbReference>
<dbReference type="InterPro" id="IPR038904">
    <property type="entry name" value="BRAT1"/>
</dbReference>
<dbReference type="PANTHER" id="PTHR21331">
    <property type="entry name" value="BRCA1-ASSOCIATED ATM ACTIVATOR 1"/>
    <property type="match status" value="1"/>
</dbReference>
<dbReference type="PANTHER" id="PTHR21331:SF2">
    <property type="entry name" value="BRCA1-ASSOCIATED ATM ACTIVATOR 1"/>
    <property type="match status" value="1"/>
</dbReference>
<dbReference type="SUPFAM" id="SSF48371">
    <property type="entry name" value="ARM repeat"/>
    <property type="match status" value="1"/>
</dbReference>
<organism>
    <name type="scientific">Ailuropoda melanoleuca</name>
    <name type="common">Giant panda</name>
    <dbReference type="NCBI Taxonomy" id="9646"/>
    <lineage>
        <taxon>Eukaryota</taxon>
        <taxon>Metazoa</taxon>
        <taxon>Chordata</taxon>
        <taxon>Craniata</taxon>
        <taxon>Vertebrata</taxon>
        <taxon>Euteleostomi</taxon>
        <taxon>Mammalia</taxon>
        <taxon>Eutheria</taxon>
        <taxon>Laurasiatheria</taxon>
        <taxon>Carnivora</taxon>
        <taxon>Caniformia</taxon>
        <taxon>Ursidae</taxon>
        <taxon>Ailuropoda</taxon>
    </lineage>
</organism>